<proteinExistence type="inferred from homology"/>
<sequence>MSNLSLFDDVSAEIAQLREQIRYHNYRYYALDEPQIPDAEYDRLMQRLRELEAQYPASVTPDSPTQRVGAAPLSAFQTVEHQIPMLSLDNAFEEADVIAFNQRILDRLKSTENIEYACELKLDGLAVSLLYRDGVLVRGATRGDGSKGEDITQNLRTIASVPLKLLGEGYPAVLEVRGEVYMPKAGFNALNEKARSTGEKLFVNPRNAAAGALRQLDSRITASRPLEMCAYSVGLVEGGELPGTHTGILAALKSWGFLTNKETATASTIADCIAFYQSIQARRDSLAYDIDGIVFKVNARELQESLGFISRAPRWAIAYKFPAQEEMTVLQDVEFQVGRTGAVTPVARLQPVFVGGVTVSNATLHNRDEIQRLGIMIGDTVIVRRAGDVIPQIVQVVESRRPTDARPVLFPDHCPVCGSPVETLEDEAIARCSGGLVCAAQRKEAIKHFASRKALDVEGLGDKLVEQLVDTGLVSKLADIYQLTGEQLAAMERMGEKSADNLLQALEASKHTTLAKFIYALGIREIGEATARNLANHFGSLEKLAEADEETLVQVNDVGPVGAHFVAEFFAQESNRQAVADLRAAGIHWQDLDVSTIEDLPLKGLTYVLTGTLEVMSRDDAKAHLLALGAKVAGSVSAKTDYVVAGPGAGSKLQKARELNLNVMDEEALLDLLRKHGRLE</sequence>
<keyword id="KW-0227">DNA damage</keyword>
<keyword id="KW-0234">DNA repair</keyword>
<keyword id="KW-0235">DNA replication</keyword>
<keyword id="KW-0436">Ligase</keyword>
<keyword id="KW-0460">Magnesium</keyword>
<keyword id="KW-0464">Manganese</keyword>
<keyword id="KW-0479">Metal-binding</keyword>
<keyword id="KW-0520">NAD</keyword>
<keyword id="KW-1185">Reference proteome</keyword>
<keyword id="KW-0862">Zinc</keyword>
<organism>
    <name type="scientific">Cellvibrio japonicus (strain Ueda107)</name>
    <name type="common">Pseudomonas fluorescens subsp. cellulosa</name>
    <dbReference type="NCBI Taxonomy" id="498211"/>
    <lineage>
        <taxon>Bacteria</taxon>
        <taxon>Pseudomonadati</taxon>
        <taxon>Pseudomonadota</taxon>
        <taxon>Gammaproteobacteria</taxon>
        <taxon>Cellvibrionales</taxon>
        <taxon>Cellvibrionaceae</taxon>
        <taxon>Cellvibrio</taxon>
    </lineage>
</organism>
<evidence type="ECO:0000255" key="1">
    <source>
        <dbReference type="HAMAP-Rule" id="MF_01588"/>
    </source>
</evidence>
<dbReference type="EC" id="6.5.1.2" evidence="1"/>
<dbReference type="EMBL" id="CP000934">
    <property type="protein sequence ID" value="ACE85035.1"/>
    <property type="molecule type" value="Genomic_DNA"/>
</dbReference>
<dbReference type="RefSeq" id="WP_012487526.1">
    <property type="nucleotide sequence ID" value="NC_010995.1"/>
</dbReference>
<dbReference type="SMR" id="B3PGQ8"/>
<dbReference type="STRING" id="498211.CJA_1909"/>
<dbReference type="KEGG" id="cja:CJA_1909"/>
<dbReference type="eggNOG" id="COG0272">
    <property type="taxonomic scope" value="Bacteria"/>
</dbReference>
<dbReference type="HOGENOM" id="CLU_007764_2_1_6"/>
<dbReference type="OrthoDB" id="9759736at2"/>
<dbReference type="Proteomes" id="UP000001036">
    <property type="component" value="Chromosome"/>
</dbReference>
<dbReference type="GO" id="GO:0005829">
    <property type="term" value="C:cytosol"/>
    <property type="evidence" value="ECO:0007669"/>
    <property type="project" value="TreeGrafter"/>
</dbReference>
<dbReference type="GO" id="GO:0003677">
    <property type="term" value="F:DNA binding"/>
    <property type="evidence" value="ECO:0007669"/>
    <property type="project" value="InterPro"/>
</dbReference>
<dbReference type="GO" id="GO:0003911">
    <property type="term" value="F:DNA ligase (NAD+) activity"/>
    <property type="evidence" value="ECO:0007669"/>
    <property type="project" value="UniProtKB-UniRule"/>
</dbReference>
<dbReference type="GO" id="GO:0046872">
    <property type="term" value="F:metal ion binding"/>
    <property type="evidence" value="ECO:0007669"/>
    <property type="project" value="UniProtKB-KW"/>
</dbReference>
<dbReference type="GO" id="GO:0006281">
    <property type="term" value="P:DNA repair"/>
    <property type="evidence" value="ECO:0007669"/>
    <property type="project" value="UniProtKB-KW"/>
</dbReference>
<dbReference type="GO" id="GO:0006260">
    <property type="term" value="P:DNA replication"/>
    <property type="evidence" value="ECO:0007669"/>
    <property type="project" value="UniProtKB-KW"/>
</dbReference>
<dbReference type="CDD" id="cd17748">
    <property type="entry name" value="BRCT_DNA_ligase_like"/>
    <property type="match status" value="1"/>
</dbReference>
<dbReference type="CDD" id="cd00114">
    <property type="entry name" value="LIGANc"/>
    <property type="match status" value="1"/>
</dbReference>
<dbReference type="FunFam" id="1.10.150.20:FF:000006">
    <property type="entry name" value="DNA ligase"/>
    <property type="match status" value="1"/>
</dbReference>
<dbReference type="FunFam" id="1.10.150.20:FF:000007">
    <property type="entry name" value="DNA ligase"/>
    <property type="match status" value="1"/>
</dbReference>
<dbReference type="FunFam" id="1.10.287.610:FF:000002">
    <property type="entry name" value="DNA ligase"/>
    <property type="match status" value="1"/>
</dbReference>
<dbReference type="FunFam" id="2.40.50.140:FF:000012">
    <property type="entry name" value="DNA ligase"/>
    <property type="match status" value="1"/>
</dbReference>
<dbReference type="FunFam" id="3.30.470.30:FF:000001">
    <property type="entry name" value="DNA ligase"/>
    <property type="match status" value="1"/>
</dbReference>
<dbReference type="Gene3D" id="6.20.10.30">
    <property type="match status" value="1"/>
</dbReference>
<dbReference type="Gene3D" id="1.10.150.20">
    <property type="entry name" value="5' to 3' exonuclease, C-terminal subdomain"/>
    <property type="match status" value="2"/>
</dbReference>
<dbReference type="Gene3D" id="3.40.50.10190">
    <property type="entry name" value="BRCT domain"/>
    <property type="match status" value="1"/>
</dbReference>
<dbReference type="Gene3D" id="3.30.470.30">
    <property type="entry name" value="DNA ligase/mRNA capping enzyme"/>
    <property type="match status" value="1"/>
</dbReference>
<dbReference type="Gene3D" id="1.10.287.610">
    <property type="entry name" value="Helix hairpin bin"/>
    <property type="match status" value="1"/>
</dbReference>
<dbReference type="Gene3D" id="2.40.50.140">
    <property type="entry name" value="Nucleic acid-binding proteins"/>
    <property type="match status" value="1"/>
</dbReference>
<dbReference type="HAMAP" id="MF_01588">
    <property type="entry name" value="DNA_ligase_A"/>
    <property type="match status" value="1"/>
</dbReference>
<dbReference type="InterPro" id="IPR001357">
    <property type="entry name" value="BRCT_dom"/>
</dbReference>
<dbReference type="InterPro" id="IPR036420">
    <property type="entry name" value="BRCT_dom_sf"/>
</dbReference>
<dbReference type="InterPro" id="IPR041663">
    <property type="entry name" value="DisA/LigA_HHH"/>
</dbReference>
<dbReference type="InterPro" id="IPR001679">
    <property type="entry name" value="DNA_ligase"/>
</dbReference>
<dbReference type="InterPro" id="IPR018239">
    <property type="entry name" value="DNA_ligase_AS"/>
</dbReference>
<dbReference type="InterPro" id="IPR033136">
    <property type="entry name" value="DNA_ligase_CS"/>
</dbReference>
<dbReference type="InterPro" id="IPR013839">
    <property type="entry name" value="DNAligase_adenylation"/>
</dbReference>
<dbReference type="InterPro" id="IPR013840">
    <property type="entry name" value="DNAligase_N"/>
</dbReference>
<dbReference type="InterPro" id="IPR003583">
    <property type="entry name" value="Hlx-hairpin-Hlx_DNA-bd_motif"/>
</dbReference>
<dbReference type="InterPro" id="IPR012340">
    <property type="entry name" value="NA-bd_OB-fold"/>
</dbReference>
<dbReference type="InterPro" id="IPR004150">
    <property type="entry name" value="NAD_DNA_ligase_OB"/>
</dbReference>
<dbReference type="InterPro" id="IPR010994">
    <property type="entry name" value="RuvA_2-like"/>
</dbReference>
<dbReference type="InterPro" id="IPR004149">
    <property type="entry name" value="Znf_DNAligase_C4"/>
</dbReference>
<dbReference type="NCBIfam" id="TIGR00575">
    <property type="entry name" value="dnlj"/>
    <property type="match status" value="1"/>
</dbReference>
<dbReference type="NCBIfam" id="NF005932">
    <property type="entry name" value="PRK07956.1"/>
    <property type="match status" value="1"/>
</dbReference>
<dbReference type="PANTHER" id="PTHR23389">
    <property type="entry name" value="CHROMOSOME TRANSMISSION FIDELITY FACTOR 18"/>
    <property type="match status" value="1"/>
</dbReference>
<dbReference type="PANTHER" id="PTHR23389:SF9">
    <property type="entry name" value="DNA LIGASE"/>
    <property type="match status" value="1"/>
</dbReference>
<dbReference type="Pfam" id="PF00533">
    <property type="entry name" value="BRCT"/>
    <property type="match status" value="1"/>
</dbReference>
<dbReference type="Pfam" id="PF01653">
    <property type="entry name" value="DNA_ligase_aden"/>
    <property type="match status" value="1"/>
</dbReference>
<dbReference type="Pfam" id="PF03120">
    <property type="entry name" value="DNA_ligase_OB"/>
    <property type="match status" value="1"/>
</dbReference>
<dbReference type="Pfam" id="PF03119">
    <property type="entry name" value="DNA_ligase_ZBD"/>
    <property type="match status" value="1"/>
</dbReference>
<dbReference type="Pfam" id="PF12826">
    <property type="entry name" value="HHH_2"/>
    <property type="match status" value="1"/>
</dbReference>
<dbReference type="Pfam" id="PF14520">
    <property type="entry name" value="HHH_5"/>
    <property type="match status" value="1"/>
</dbReference>
<dbReference type="Pfam" id="PF22745">
    <property type="entry name" value="Nlig-Ia"/>
    <property type="match status" value="1"/>
</dbReference>
<dbReference type="PIRSF" id="PIRSF001604">
    <property type="entry name" value="LigA"/>
    <property type="match status" value="1"/>
</dbReference>
<dbReference type="SMART" id="SM00292">
    <property type="entry name" value="BRCT"/>
    <property type="match status" value="1"/>
</dbReference>
<dbReference type="SMART" id="SM00278">
    <property type="entry name" value="HhH1"/>
    <property type="match status" value="3"/>
</dbReference>
<dbReference type="SMART" id="SM00532">
    <property type="entry name" value="LIGANc"/>
    <property type="match status" value="1"/>
</dbReference>
<dbReference type="SUPFAM" id="SSF52113">
    <property type="entry name" value="BRCT domain"/>
    <property type="match status" value="1"/>
</dbReference>
<dbReference type="SUPFAM" id="SSF56091">
    <property type="entry name" value="DNA ligase/mRNA capping enzyme, catalytic domain"/>
    <property type="match status" value="1"/>
</dbReference>
<dbReference type="SUPFAM" id="SSF50249">
    <property type="entry name" value="Nucleic acid-binding proteins"/>
    <property type="match status" value="1"/>
</dbReference>
<dbReference type="SUPFAM" id="SSF47781">
    <property type="entry name" value="RuvA domain 2-like"/>
    <property type="match status" value="1"/>
</dbReference>
<dbReference type="PROSITE" id="PS50172">
    <property type="entry name" value="BRCT"/>
    <property type="match status" value="1"/>
</dbReference>
<dbReference type="PROSITE" id="PS01055">
    <property type="entry name" value="DNA_LIGASE_N1"/>
    <property type="match status" value="1"/>
</dbReference>
<dbReference type="PROSITE" id="PS01056">
    <property type="entry name" value="DNA_LIGASE_N2"/>
    <property type="match status" value="1"/>
</dbReference>
<name>DNLJ_CELJU</name>
<protein>
    <recommendedName>
        <fullName evidence="1">DNA ligase</fullName>
        <ecNumber evidence="1">6.5.1.2</ecNumber>
    </recommendedName>
    <alternativeName>
        <fullName evidence="1">Polydeoxyribonucleotide synthase [NAD(+)]</fullName>
    </alternativeName>
</protein>
<reference key="1">
    <citation type="journal article" date="2008" name="J. Bacteriol.">
        <title>Insights into plant cell wall degradation from the genome sequence of the soil bacterium Cellvibrio japonicus.</title>
        <authorList>
            <person name="DeBoy R.T."/>
            <person name="Mongodin E.F."/>
            <person name="Fouts D.E."/>
            <person name="Tailford L.E."/>
            <person name="Khouri H."/>
            <person name="Emerson J.B."/>
            <person name="Mohamoud Y."/>
            <person name="Watkins K."/>
            <person name="Henrissat B."/>
            <person name="Gilbert H.J."/>
            <person name="Nelson K.E."/>
        </authorList>
    </citation>
    <scope>NUCLEOTIDE SEQUENCE [LARGE SCALE GENOMIC DNA]</scope>
    <source>
        <strain>Ueda107</strain>
    </source>
</reference>
<gene>
    <name evidence="1" type="primary">ligA</name>
    <name type="ordered locus">CJA_1909</name>
</gene>
<comment type="function">
    <text evidence="1">DNA ligase that catalyzes the formation of phosphodiester linkages between 5'-phosphoryl and 3'-hydroxyl groups in double-stranded DNA using NAD as a coenzyme and as the energy source for the reaction. It is essential for DNA replication and repair of damaged DNA.</text>
</comment>
<comment type="catalytic activity">
    <reaction evidence="1">
        <text>NAD(+) + (deoxyribonucleotide)n-3'-hydroxyl + 5'-phospho-(deoxyribonucleotide)m = (deoxyribonucleotide)n+m + AMP + beta-nicotinamide D-nucleotide.</text>
        <dbReference type="EC" id="6.5.1.2"/>
    </reaction>
</comment>
<comment type="cofactor">
    <cofactor evidence="1">
        <name>Mg(2+)</name>
        <dbReference type="ChEBI" id="CHEBI:18420"/>
    </cofactor>
    <cofactor evidence="1">
        <name>Mn(2+)</name>
        <dbReference type="ChEBI" id="CHEBI:29035"/>
    </cofactor>
</comment>
<comment type="similarity">
    <text evidence="1">Belongs to the NAD-dependent DNA ligase family. LigA subfamily.</text>
</comment>
<accession>B3PGQ8</accession>
<feature type="chain" id="PRO_0000380330" description="DNA ligase">
    <location>
        <begin position="1"/>
        <end position="680"/>
    </location>
</feature>
<feature type="domain" description="BRCT" evidence="1">
    <location>
        <begin position="597"/>
        <end position="680"/>
    </location>
</feature>
<feature type="active site" description="N6-AMP-lysine intermediate" evidence="1">
    <location>
        <position position="121"/>
    </location>
</feature>
<feature type="binding site" evidence="1">
    <location>
        <begin position="38"/>
        <end position="42"/>
    </location>
    <ligand>
        <name>NAD(+)</name>
        <dbReference type="ChEBI" id="CHEBI:57540"/>
    </ligand>
</feature>
<feature type="binding site" evidence="1">
    <location>
        <begin position="87"/>
        <end position="88"/>
    </location>
    <ligand>
        <name>NAD(+)</name>
        <dbReference type="ChEBI" id="CHEBI:57540"/>
    </ligand>
</feature>
<feature type="binding site" evidence="1">
    <location>
        <position position="119"/>
    </location>
    <ligand>
        <name>NAD(+)</name>
        <dbReference type="ChEBI" id="CHEBI:57540"/>
    </ligand>
</feature>
<feature type="binding site" evidence="1">
    <location>
        <position position="142"/>
    </location>
    <ligand>
        <name>NAD(+)</name>
        <dbReference type="ChEBI" id="CHEBI:57540"/>
    </ligand>
</feature>
<feature type="binding site" evidence="1">
    <location>
        <position position="179"/>
    </location>
    <ligand>
        <name>NAD(+)</name>
        <dbReference type="ChEBI" id="CHEBI:57540"/>
    </ligand>
</feature>
<feature type="binding site" evidence="1">
    <location>
        <position position="296"/>
    </location>
    <ligand>
        <name>NAD(+)</name>
        <dbReference type="ChEBI" id="CHEBI:57540"/>
    </ligand>
</feature>
<feature type="binding site" evidence="1">
    <location>
        <position position="320"/>
    </location>
    <ligand>
        <name>NAD(+)</name>
        <dbReference type="ChEBI" id="CHEBI:57540"/>
    </ligand>
</feature>
<feature type="binding site" evidence="1">
    <location>
        <position position="414"/>
    </location>
    <ligand>
        <name>Zn(2+)</name>
        <dbReference type="ChEBI" id="CHEBI:29105"/>
    </ligand>
</feature>
<feature type="binding site" evidence="1">
    <location>
        <position position="417"/>
    </location>
    <ligand>
        <name>Zn(2+)</name>
        <dbReference type="ChEBI" id="CHEBI:29105"/>
    </ligand>
</feature>
<feature type="binding site" evidence="1">
    <location>
        <position position="432"/>
    </location>
    <ligand>
        <name>Zn(2+)</name>
        <dbReference type="ChEBI" id="CHEBI:29105"/>
    </ligand>
</feature>
<feature type="binding site" evidence="1">
    <location>
        <position position="438"/>
    </location>
    <ligand>
        <name>Zn(2+)</name>
        <dbReference type="ChEBI" id="CHEBI:29105"/>
    </ligand>
</feature>